<feature type="chain" id="PRO_0000337678" description="Leucine-rich repeat-containing protein 9">
    <location>
        <begin position="1"/>
        <end position="1502"/>
    </location>
</feature>
<feature type="repeat" description="LRR 1">
    <location>
        <begin position="53"/>
        <end position="79"/>
    </location>
</feature>
<feature type="repeat" description="LRR 2">
    <location>
        <begin position="97"/>
        <end position="119"/>
    </location>
</feature>
<feature type="repeat" description="LRR 3">
    <location>
        <begin position="120"/>
        <end position="141"/>
    </location>
</feature>
<feature type="repeat" description="LRR 4">
    <location>
        <begin position="142"/>
        <end position="164"/>
    </location>
</feature>
<feature type="repeat" description="LRR 5">
    <location>
        <begin position="166"/>
        <end position="188"/>
    </location>
</feature>
<feature type="repeat" description="LRR 6">
    <location>
        <begin position="224"/>
        <end position="247"/>
    </location>
</feature>
<feature type="repeat" description="LRR 7">
    <location>
        <begin position="296"/>
        <end position="320"/>
    </location>
</feature>
<feature type="repeat" description="LRR 8">
    <location>
        <begin position="699"/>
        <end position="721"/>
    </location>
</feature>
<feature type="repeat" description="LRR 9">
    <location>
        <begin position="722"/>
        <end position="744"/>
    </location>
</feature>
<feature type="repeat" description="LRR 10">
    <location>
        <begin position="746"/>
        <end position="764"/>
    </location>
</feature>
<feature type="repeat" description="LRR 11">
    <location>
        <begin position="765"/>
        <end position="790"/>
    </location>
</feature>
<feature type="repeat" description="LRR 12">
    <location>
        <begin position="792"/>
        <end position="814"/>
    </location>
</feature>
<feature type="repeat" description="LRR 13">
    <location>
        <begin position="822"/>
        <end position="849"/>
    </location>
</feature>
<feature type="repeat" description="LRR 14">
    <location>
        <begin position="894"/>
        <end position="916"/>
    </location>
</feature>
<feature type="repeat" description="LRR 15">
    <location>
        <begin position="917"/>
        <end position="938"/>
    </location>
</feature>
<feature type="repeat" description="LRR 16">
    <location>
        <begin position="939"/>
        <end position="960"/>
    </location>
</feature>
<feature type="repeat" description="LRR 17">
    <location>
        <begin position="961"/>
        <end position="983"/>
    </location>
</feature>
<feature type="repeat" description="LRR 18">
    <location>
        <begin position="985"/>
        <end position="1009"/>
    </location>
</feature>
<feature type="repeat" description="LRR 19">
    <location>
        <begin position="1011"/>
        <end position="1030"/>
    </location>
</feature>
<feature type="repeat" description="LRR 20">
    <location>
        <begin position="1031"/>
        <end position="1053"/>
    </location>
</feature>
<feature type="repeat" description="LRR 21">
    <location>
        <begin position="1100"/>
        <end position="1123"/>
    </location>
</feature>
<feature type="repeat" description="LRR 22">
    <location>
        <begin position="1124"/>
        <end position="1146"/>
    </location>
</feature>
<feature type="repeat" description="LRR 23">
    <location>
        <begin position="1147"/>
        <end position="1170"/>
    </location>
</feature>
<feature type="repeat" description="LRR 24">
    <location>
        <begin position="1209"/>
        <end position="1232"/>
    </location>
</feature>
<feature type="repeat" description="LRR 25">
    <location>
        <begin position="1234"/>
        <end position="1255"/>
    </location>
</feature>
<feature type="repeat" description="LRR 26">
    <location>
        <begin position="1256"/>
        <end position="1278"/>
    </location>
</feature>
<feature type="repeat" description="LRR 27">
    <location>
        <begin position="1280"/>
        <end position="1301"/>
    </location>
</feature>
<feature type="repeat" description="LRR 28">
    <location>
        <begin position="1302"/>
        <end position="1325"/>
    </location>
</feature>
<feature type="repeat" description="LRR 29">
    <location>
        <begin position="1327"/>
        <end position="1351"/>
    </location>
</feature>
<feature type="region of interest" description="Disordered" evidence="1">
    <location>
        <begin position="317"/>
        <end position="342"/>
    </location>
</feature>
<feature type="region of interest" description="Disordered" evidence="1">
    <location>
        <begin position="1479"/>
        <end position="1502"/>
    </location>
</feature>
<feature type="compositionally biased region" description="Polar residues" evidence="1">
    <location>
        <begin position="1479"/>
        <end position="1496"/>
    </location>
</feature>
<evidence type="ECO:0000256" key="1">
    <source>
        <dbReference type="SAM" id="MobiDB-lite"/>
    </source>
</evidence>
<evidence type="ECO:0000305" key="2"/>
<name>LRRC9_XENTR</name>
<protein>
    <recommendedName>
        <fullName>Leucine-rich repeat-containing protein 9</fullName>
    </recommendedName>
</protein>
<sequence length="1502" mass="171429">MLSNENLNSEEIIRELCACNGLSFEKIRQDGPATTTLEMFFSGYPKMAGLSYFPNLTQLILVGQNIHCIAGLESCHFLKELWITECHLSKIQGLHHCADLQKLYLYHNEISVIEGLENLLKLEVLWLNNNQINVIEGLDMMQNLKELNLANNLIHSIGESLDPNVQLERLNLSGNKISSFKELTNLARLPSLMDLGLKDPQYSPNPVCLLCNYAIHVLYHIPQLQRLDTYDVSEKQIKNLAESTVVKKIMYYNMRMKNNQRQQREELEKVRERTSKAKQVPENRIRALSFLVKNLEHELTDMKSSGNMQANIPISNKFHENNCDTEESNSQQSSERRKNNSDRLEQIHKKICALKERMIFWTRKLSEVEKHHEEKCRRMKDSFHLLDQFLQTELETVGNVRFEEGTAADSWFKSCYDLIVSRFCAMNFRAYGISGIKIHRIVRVHNRILRLKFEDKVQYWMDNEDLYTTESYKKKLEYLFYIFDPKLPIDKKELLHVLENGCNITRSSQLPEQEQVEAVLLTNSMSLCEGPRLEFLQKQAMNKSCDPEAFKDGIIVIAKVFLGRSVKARDDLPIKPNNYAKVNSVYRLQKFANSTFNSLNDEICSSKEHGNCDCSLRQCEWLVFDHEFILPEYVVEFEYISMEKSSGFVTPSNENAEDVSHDLKLDEDAIALEPFLKPKPKIISLDEKTVLSVARANIYSQITVLNLHGNSLSKLKDISRLNGLRKLIISFNEFSSLEDVSYLTNLEYLDASHNQVITLEGFKGLGKLKYLDLSWNKLTNSREDLHILRKHAIQLSSLDIRYNFWQKPASVLKDTIAILPSLTHLNGVTITEDEISEALQISSGSRITQASLLINARTDTVKPRCLNLLPSAQILAQFSKNCLDPNAELSNSWYTKITSLTLDSQNLVRITNLEKLVNLRWASFSSNHLTKIEGLEHCVNLEELNLDDNSISKLEGLSKLTKLRRLSINNNLLAGFDRHVIESLSHLHFLSAENNNISSLAGLQRGYKLIELYLSNNCISSNQEIYSLKGLNNLVILDMWGNPILLKHENYRLFVIFHLSAIKALDGVAVEPSECENAKDMFGGRLTSDMIAERIGHQRFTELQDLNWRTSSIRSIDLVPADHFRNVQTVNLENNNLTSFSGLIFLPNIKNLYLNHNRIESILPQQKSQSHLTNRQILHQKVSSSGYGQQGTSKGSRDTVYGEALSPVMQSLEVLHLGYNGINSLPMLQLGRLRNLKSLYLQGNEISHVEGLENLQFLRELVLDHNRIKAIAETSFAKLNSLVSLNLEENRLRDLNNLPPLLKLRKLLIGSNKIQEISEIEKLEVIPALVELSISGNPISRKPFLRNLLVVRLQNLQILDGILITAEDRARAEMYFMEQQSLTVPNAVMDLGNPVSTMIVSKPLPLRVTNFPLAGGAHHSLGADLHFNNGHEDIFQNEANKYKKLKNYTVGVGHNPQNTQDIALRQLRGGTHFPASYLTQQSGQARSQQKHPFNQENEGRCV</sequence>
<gene>
    <name type="primary">lrrc9</name>
</gene>
<reference key="1">
    <citation type="submission" date="2006-10" db="EMBL/GenBank/DDBJ databases">
        <authorList>
            <consortium name="NIH - Xenopus Gene Collection (XGC) project"/>
        </authorList>
    </citation>
    <scope>NUCLEOTIDE SEQUENCE [LARGE SCALE MRNA]</scope>
    <source>
        <tissue>Testis</tissue>
    </source>
</reference>
<comment type="sequence caution" evidence="2">
    <conflict type="erroneous initiation">
        <sequence resource="EMBL-CDS" id="AAI25747"/>
    </conflict>
</comment>
<organism>
    <name type="scientific">Xenopus tropicalis</name>
    <name type="common">Western clawed frog</name>
    <name type="synonym">Silurana tropicalis</name>
    <dbReference type="NCBI Taxonomy" id="8364"/>
    <lineage>
        <taxon>Eukaryota</taxon>
        <taxon>Metazoa</taxon>
        <taxon>Chordata</taxon>
        <taxon>Craniata</taxon>
        <taxon>Vertebrata</taxon>
        <taxon>Euteleostomi</taxon>
        <taxon>Amphibia</taxon>
        <taxon>Batrachia</taxon>
        <taxon>Anura</taxon>
        <taxon>Pipoidea</taxon>
        <taxon>Pipidae</taxon>
        <taxon>Xenopodinae</taxon>
        <taxon>Xenopus</taxon>
        <taxon>Silurana</taxon>
    </lineage>
</organism>
<accession>A0JM56</accession>
<dbReference type="EMBL" id="BC125746">
    <property type="protein sequence ID" value="AAI25747.1"/>
    <property type="status" value="ALT_INIT"/>
    <property type="molecule type" value="mRNA"/>
</dbReference>
<dbReference type="RefSeq" id="NP_001072747.1">
    <property type="nucleotide sequence ID" value="NM_001079279.1"/>
</dbReference>
<dbReference type="SMR" id="A0JM56"/>
<dbReference type="FunCoup" id="A0JM56">
    <property type="interactions" value="466"/>
</dbReference>
<dbReference type="STRING" id="8364.ENSXETP00000043658"/>
<dbReference type="PaxDb" id="8364-ENSXETP00000061120"/>
<dbReference type="DNASU" id="780204"/>
<dbReference type="GeneID" id="780204"/>
<dbReference type="KEGG" id="xtr:780204"/>
<dbReference type="CTD" id="341883"/>
<dbReference type="eggNOG" id="KOG0531">
    <property type="taxonomic scope" value="Eukaryota"/>
</dbReference>
<dbReference type="InParanoid" id="A0JM56"/>
<dbReference type="OrthoDB" id="1517790at2759"/>
<dbReference type="Proteomes" id="UP000008143">
    <property type="component" value="Chromosome 8"/>
</dbReference>
<dbReference type="GO" id="GO:0005737">
    <property type="term" value="C:cytoplasm"/>
    <property type="evidence" value="ECO:0000250"/>
    <property type="project" value="UniProtKB"/>
</dbReference>
<dbReference type="Gene3D" id="3.80.10.10">
    <property type="entry name" value="Ribonuclease Inhibitor"/>
    <property type="match status" value="7"/>
</dbReference>
<dbReference type="InterPro" id="IPR001611">
    <property type="entry name" value="Leu-rich_rpt"/>
</dbReference>
<dbReference type="InterPro" id="IPR025875">
    <property type="entry name" value="Leu-rich_rpt_4"/>
</dbReference>
<dbReference type="InterPro" id="IPR003591">
    <property type="entry name" value="Leu-rich_rpt_typical-subtyp"/>
</dbReference>
<dbReference type="InterPro" id="IPR032675">
    <property type="entry name" value="LRR_dom_sf"/>
</dbReference>
<dbReference type="InterPro" id="IPR050836">
    <property type="entry name" value="SDS22/Internalin_LRR"/>
</dbReference>
<dbReference type="PANTHER" id="PTHR46652">
    <property type="entry name" value="LEUCINE-RICH REPEAT AND IQ DOMAIN-CONTAINING PROTEIN 1-RELATED"/>
    <property type="match status" value="1"/>
</dbReference>
<dbReference type="PANTHER" id="PTHR46652:SF3">
    <property type="entry name" value="LEUCINE-RICH REPEAT-CONTAINING PROTEIN 9"/>
    <property type="match status" value="1"/>
</dbReference>
<dbReference type="Pfam" id="PF12799">
    <property type="entry name" value="LRR_4"/>
    <property type="match status" value="1"/>
</dbReference>
<dbReference type="Pfam" id="PF13855">
    <property type="entry name" value="LRR_8"/>
    <property type="match status" value="1"/>
</dbReference>
<dbReference type="Pfam" id="PF14580">
    <property type="entry name" value="LRR_9"/>
    <property type="match status" value="2"/>
</dbReference>
<dbReference type="SMART" id="SM00364">
    <property type="entry name" value="LRR_BAC"/>
    <property type="match status" value="8"/>
</dbReference>
<dbReference type="SMART" id="SM00365">
    <property type="entry name" value="LRR_SD22"/>
    <property type="match status" value="16"/>
</dbReference>
<dbReference type="SMART" id="SM00369">
    <property type="entry name" value="LRR_TYP"/>
    <property type="match status" value="13"/>
</dbReference>
<dbReference type="SUPFAM" id="SSF52058">
    <property type="entry name" value="L domain-like"/>
    <property type="match status" value="1"/>
</dbReference>
<dbReference type="SUPFAM" id="SSF52075">
    <property type="entry name" value="Outer arm dynein light chain 1"/>
    <property type="match status" value="2"/>
</dbReference>
<dbReference type="PROSITE" id="PS51450">
    <property type="entry name" value="LRR"/>
    <property type="match status" value="23"/>
</dbReference>
<proteinExistence type="evidence at transcript level"/>
<keyword id="KW-0433">Leucine-rich repeat</keyword>
<keyword id="KW-1185">Reference proteome</keyword>
<keyword id="KW-0677">Repeat</keyword>